<gene>
    <name evidence="1" type="primary">rplK</name>
    <name type="ordered locus">lmo0248</name>
</gene>
<organism>
    <name type="scientific">Listeria monocytogenes serovar 1/2a (strain ATCC BAA-679 / EGD-e)</name>
    <dbReference type="NCBI Taxonomy" id="169963"/>
    <lineage>
        <taxon>Bacteria</taxon>
        <taxon>Bacillati</taxon>
        <taxon>Bacillota</taxon>
        <taxon>Bacilli</taxon>
        <taxon>Bacillales</taxon>
        <taxon>Listeriaceae</taxon>
        <taxon>Listeria</taxon>
    </lineage>
</organism>
<sequence>MAKKVIKEVKLQIPAGKANPAPPVGPALGQAGVNIMGFCKEFNARTADQAGLIIPVVITVFEDRSFTFITKTPPAAVLLKKAAKVEKGSGEPNKTKVASVTRAQVQEIAETKMPDLNAANVESAMLMVEGTARSMGITIQD</sequence>
<proteinExistence type="evidence at protein level"/>
<reference key="1">
    <citation type="journal article" date="2001" name="Science">
        <title>Comparative genomics of Listeria species.</title>
        <authorList>
            <person name="Glaser P."/>
            <person name="Frangeul L."/>
            <person name="Buchrieser C."/>
            <person name="Rusniok C."/>
            <person name="Amend A."/>
            <person name="Baquero F."/>
            <person name="Berche P."/>
            <person name="Bloecker H."/>
            <person name="Brandt P."/>
            <person name="Chakraborty T."/>
            <person name="Charbit A."/>
            <person name="Chetouani F."/>
            <person name="Couve E."/>
            <person name="de Daruvar A."/>
            <person name="Dehoux P."/>
            <person name="Domann E."/>
            <person name="Dominguez-Bernal G."/>
            <person name="Duchaud E."/>
            <person name="Durant L."/>
            <person name="Dussurget O."/>
            <person name="Entian K.-D."/>
            <person name="Fsihi H."/>
            <person name="Garcia-del Portillo F."/>
            <person name="Garrido P."/>
            <person name="Gautier L."/>
            <person name="Goebel W."/>
            <person name="Gomez-Lopez N."/>
            <person name="Hain T."/>
            <person name="Hauf J."/>
            <person name="Jackson D."/>
            <person name="Jones L.-M."/>
            <person name="Kaerst U."/>
            <person name="Kreft J."/>
            <person name="Kuhn M."/>
            <person name="Kunst F."/>
            <person name="Kurapkat G."/>
            <person name="Madueno E."/>
            <person name="Maitournam A."/>
            <person name="Mata Vicente J."/>
            <person name="Ng E."/>
            <person name="Nedjari H."/>
            <person name="Nordsiek G."/>
            <person name="Novella S."/>
            <person name="de Pablos B."/>
            <person name="Perez-Diaz J.-C."/>
            <person name="Purcell R."/>
            <person name="Remmel B."/>
            <person name="Rose M."/>
            <person name="Schlueter T."/>
            <person name="Simoes N."/>
            <person name="Tierrez A."/>
            <person name="Vazquez-Boland J.-A."/>
            <person name="Voss H."/>
            <person name="Wehland J."/>
            <person name="Cossart P."/>
        </authorList>
    </citation>
    <scope>NUCLEOTIDE SEQUENCE [LARGE SCALE GENOMIC DNA]</scope>
    <source>
        <strain>ATCC BAA-679 / EGD-e</strain>
    </source>
</reference>
<name>RL11_LISMO</name>
<keyword id="KW-0002">3D-structure</keyword>
<keyword id="KW-0488">Methylation</keyword>
<keyword id="KW-1185">Reference proteome</keyword>
<keyword id="KW-0687">Ribonucleoprotein</keyword>
<keyword id="KW-0689">Ribosomal protein</keyword>
<keyword id="KW-0694">RNA-binding</keyword>
<keyword id="KW-0699">rRNA-binding</keyword>
<evidence type="ECO:0000255" key="1">
    <source>
        <dbReference type="HAMAP-Rule" id="MF_00736"/>
    </source>
</evidence>
<evidence type="ECO:0000305" key="2"/>
<evidence type="ECO:0007829" key="3">
    <source>
        <dbReference type="PDB" id="8A57"/>
    </source>
</evidence>
<feature type="chain" id="PRO_0000104311" description="Large ribosomal subunit protein uL11">
    <location>
        <begin position="1"/>
        <end position="141"/>
    </location>
</feature>
<feature type="strand" evidence="3">
    <location>
        <begin position="8"/>
        <end position="13"/>
    </location>
</feature>
<feature type="turn" evidence="3">
    <location>
        <begin position="21"/>
        <end position="24"/>
    </location>
</feature>
<feature type="helix" evidence="3">
    <location>
        <begin position="25"/>
        <end position="28"/>
    </location>
</feature>
<feature type="turn" evidence="3">
    <location>
        <begin position="29"/>
        <end position="31"/>
    </location>
</feature>
<feature type="helix" evidence="3">
    <location>
        <begin position="36"/>
        <end position="39"/>
    </location>
</feature>
<feature type="helix" evidence="3">
    <location>
        <begin position="42"/>
        <end position="45"/>
    </location>
</feature>
<feature type="strand" evidence="3">
    <location>
        <begin position="47"/>
        <end position="49"/>
    </location>
</feature>
<feature type="strand" evidence="3">
    <location>
        <begin position="54"/>
        <end position="60"/>
    </location>
</feature>
<feature type="strand" evidence="3">
    <location>
        <begin position="62"/>
        <end position="64"/>
    </location>
</feature>
<feature type="strand" evidence="3">
    <location>
        <begin position="66"/>
        <end position="69"/>
    </location>
</feature>
<feature type="helix" evidence="3">
    <location>
        <begin position="75"/>
        <end position="78"/>
    </location>
</feature>
<feature type="strand" evidence="3">
    <location>
        <begin position="81"/>
        <end position="83"/>
    </location>
</feature>
<feature type="turn" evidence="3">
    <location>
        <begin position="92"/>
        <end position="94"/>
    </location>
</feature>
<feature type="strand" evidence="3">
    <location>
        <begin position="98"/>
        <end position="101"/>
    </location>
</feature>
<feature type="helix" evidence="3">
    <location>
        <begin position="102"/>
        <end position="111"/>
    </location>
</feature>
<feature type="turn" evidence="3">
    <location>
        <begin position="112"/>
        <end position="115"/>
    </location>
</feature>
<feature type="strand" evidence="3">
    <location>
        <begin position="120"/>
        <end position="122"/>
    </location>
</feature>
<feature type="helix" evidence="3">
    <location>
        <begin position="123"/>
        <end position="135"/>
    </location>
</feature>
<feature type="strand" evidence="3">
    <location>
        <begin position="137"/>
        <end position="140"/>
    </location>
</feature>
<protein>
    <recommendedName>
        <fullName evidence="1">Large ribosomal subunit protein uL11</fullName>
    </recommendedName>
    <alternativeName>
        <fullName evidence="2">50S ribosomal protein L11</fullName>
    </alternativeName>
</protein>
<comment type="function">
    <text evidence="1">Forms part of the ribosomal stalk which helps the ribosome interact with GTP-bound translation factors.</text>
</comment>
<comment type="subunit">
    <text evidence="1">Part of the ribosomal stalk of the 50S ribosomal subunit. Interacts with L10 and the large rRNA to form the base of the stalk. L10 forms an elongated spine to which L12 dimers bind in a sequential fashion forming a multimeric L10(L12)X complex.</text>
</comment>
<comment type="PTM">
    <text evidence="1">One or more lysine residues are methylated.</text>
</comment>
<comment type="similarity">
    <text evidence="1">Belongs to the universal ribosomal protein uL11 family.</text>
</comment>
<dbReference type="EMBL" id="AL591974">
    <property type="protein sequence ID" value="CAD00775.1"/>
    <property type="molecule type" value="Genomic_DNA"/>
</dbReference>
<dbReference type="PIR" id="AI1105">
    <property type="entry name" value="AI1105"/>
</dbReference>
<dbReference type="RefSeq" id="NP_463779.1">
    <property type="nucleotide sequence ID" value="NC_003210.1"/>
</dbReference>
<dbReference type="RefSeq" id="WP_003718336.1">
    <property type="nucleotide sequence ID" value="NZ_CP149495.1"/>
</dbReference>
<dbReference type="PDB" id="8A57">
    <property type="method" value="EM"/>
    <property type="resolution" value="2.30 A"/>
    <property type="chains" value="E=1-141"/>
</dbReference>
<dbReference type="PDBsum" id="8A57"/>
<dbReference type="EMDB" id="EMD-15161"/>
<dbReference type="SMR" id="P66054"/>
<dbReference type="STRING" id="169963.gene:17592899"/>
<dbReference type="PaxDb" id="169963-lmo0248"/>
<dbReference type="EnsemblBacteria" id="CAD00775">
    <property type="protein sequence ID" value="CAD00775"/>
    <property type="gene ID" value="CAD00775"/>
</dbReference>
<dbReference type="GeneID" id="93238162"/>
<dbReference type="GeneID" id="987298"/>
<dbReference type="KEGG" id="lmo:lmo0248"/>
<dbReference type="PATRIC" id="fig|169963.11.peg.256"/>
<dbReference type="eggNOG" id="COG0080">
    <property type="taxonomic scope" value="Bacteria"/>
</dbReference>
<dbReference type="HOGENOM" id="CLU_074237_2_1_9"/>
<dbReference type="OrthoDB" id="9802408at2"/>
<dbReference type="PhylomeDB" id="P66054"/>
<dbReference type="BioCyc" id="LMON169963:LMO0248-MONOMER"/>
<dbReference type="Proteomes" id="UP000000817">
    <property type="component" value="Chromosome"/>
</dbReference>
<dbReference type="GO" id="GO:0022625">
    <property type="term" value="C:cytosolic large ribosomal subunit"/>
    <property type="evidence" value="ECO:0000318"/>
    <property type="project" value="GO_Central"/>
</dbReference>
<dbReference type="GO" id="GO:0070180">
    <property type="term" value="F:large ribosomal subunit rRNA binding"/>
    <property type="evidence" value="ECO:0000318"/>
    <property type="project" value="GO_Central"/>
</dbReference>
<dbReference type="GO" id="GO:0003735">
    <property type="term" value="F:structural constituent of ribosome"/>
    <property type="evidence" value="ECO:0000318"/>
    <property type="project" value="GO_Central"/>
</dbReference>
<dbReference type="GO" id="GO:0006412">
    <property type="term" value="P:translation"/>
    <property type="evidence" value="ECO:0000318"/>
    <property type="project" value="GO_Central"/>
</dbReference>
<dbReference type="CDD" id="cd00349">
    <property type="entry name" value="Ribosomal_L11"/>
    <property type="match status" value="1"/>
</dbReference>
<dbReference type="FunFam" id="1.10.10.250:FF:000001">
    <property type="entry name" value="50S ribosomal protein L11"/>
    <property type="match status" value="1"/>
</dbReference>
<dbReference type="FunFam" id="3.30.1550.10:FF:000001">
    <property type="entry name" value="50S ribosomal protein L11"/>
    <property type="match status" value="1"/>
</dbReference>
<dbReference type="Gene3D" id="1.10.10.250">
    <property type="entry name" value="Ribosomal protein L11, C-terminal domain"/>
    <property type="match status" value="1"/>
</dbReference>
<dbReference type="Gene3D" id="3.30.1550.10">
    <property type="entry name" value="Ribosomal protein L11/L12, N-terminal domain"/>
    <property type="match status" value="1"/>
</dbReference>
<dbReference type="HAMAP" id="MF_00736">
    <property type="entry name" value="Ribosomal_uL11"/>
    <property type="match status" value="1"/>
</dbReference>
<dbReference type="InterPro" id="IPR000911">
    <property type="entry name" value="Ribosomal_uL11"/>
</dbReference>
<dbReference type="InterPro" id="IPR006519">
    <property type="entry name" value="Ribosomal_uL11_bac-typ"/>
</dbReference>
<dbReference type="InterPro" id="IPR020783">
    <property type="entry name" value="Ribosomal_uL11_C"/>
</dbReference>
<dbReference type="InterPro" id="IPR036769">
    <property type="entry name" value="Ribosomal_uL11_C_sf"/>
</dbReference>
<dbReference type="InterPro" id="IPR020784">
    <property type="entry name" value="Ribosomal_uL11_N"/>
</dbReference>
<dbReference type="InterPro" id="IPR036796">
    <property type="entry name" value="Ribosomal_uL11_N_sf"/>
</dbReference>
<dbReference type="NCBIfam" id="TIGR01632">
    <property type="entry name" value="L11_bact"/>
    <property type="match status" value="1"/>
</dbReference>
<dbReference type="PANTHER" id="PTHR11661">
    <property type="entry name" value="60S RIBOSOMAL PROTEIN L12"/>
    <property type="match status" value="1"/>
</dbReference>
<dbReference type="PANTHER" id="PTHR11661:SF1">
    <property type="entry name" value="LARGE RIBOSOMAL SUBUNIT PROTEIN UL11M"/>
    <property type="match status" value="1"/>
</dbReference>
<dbReference type="Pfam" id="PF00298">
    <property type="entry name" value="Ribosomal_L11"/>
    <property type="match status" value="1"/>
</dbReference>
<dbReference type="Pfam" id="PF03946">
    <property type="entry name" value="Ribosomal_L11_N"/>
    <property type="match status" value="1"/>
</dbReference>
<dbReference type="SMART" id="SM00649">
    <property type="entry name" value="RL11"/>
    <property type="match status" value="1"/>
</dbReference>
<dbReference type="SUPFAM" id="SSF54747">
    <property type="entry name" value="Ribosomal L11/L12e N-terminal domain"/>
    <property type="match status" value="1"/>
</dbReference>
<dbReference type="SUPFAM" id="SSF46906">
    <property type="entry name" value="Ribosomal protein L11, C-terminal domain"/>
    <property type="match status" value="1"/>
</dbReference>
<accession>P66054</accession>
<accession>Q92F27</accession>